<name>EFTS_STAAW</name>
<comment type="function">
    <text evidence="1">Associates with the EF-Tu.GDP complex and induces the exchange of GDP to GTP. It remains bound to the aminoacyl-tRNA.EF-Tu.GTP complex up to the GTP hydrolysis stage on the ribosome.</text>
</comment>
<comment type="subcellular location">
    <subcellularLocation>
        <location evidence="1">Cytoplasm</location>
    </subcellularLocation>
</comment>
<comment type="similarity">
    <text evidence="1">Belongs to the EF-Ts family.</text>
</comment>
<keyword id="KW-0963">Cytoplasm</keyword>
<keyword id="KW-0251">Elongation factor</keyword>
<keyword id="KW-0648">Protein biosynthesis</keyword>
<gene>
    <name evidence="1" type="primary">tsf</name>
    <name type="ordered locus">MW1140</name>
</gene>
<organism>
    <name type="scientific">Staphylococcus aureus (strain MW2)</name>
    <dbReference type="NCBI Taxonomy" id="196620"/>
    <lineage>
        <taxon>Bacteria</taxon>
        <taxon>Bacillati</taxon>
        <taxon>Bacillota</taxon>
        <taxon>Bacilli</taxon>
        <taxon>Bacillales</taxon>
        <taxon>Staphylococcaceae</taxon>
        <taxon>Staphylococcus</taxon>
    </lineage>
</organism>
<proteinExistence type="inferred from homology"/>
<protein>
    <recommendedName>
        <fullName evidence="1">Elongation factor Ts</fullName>
        <shortName evidence="1">EF-Ts</shortName>
    </recommendedName>
</protein>
<sequence>MATISAKLVKELREKTGAGMMDCKKALTETDGDIDKAIDYLREKGIAKAAKKADRIAAEGLVHVETKGNDAVIVEINSETDFVARNEGFQELVKEIANQVLDTKAETVEALMETTLPNGKSVDERIKEAISTIGEKLSVRRFAIRTKTDNDAFGAYLHMGGRIGVLTVVEGSTDEEAARDVAMHIAAINPKYVSSEQVSEEEINHEREVLKQQALNEGKPENIVEKMVEGRLRKYLQEICAVDQDFVKNPDVTVEAFLKTKGGKLVDFVRYEVGEGMEKREENFADEVKGQMK</sequence>
<evidence type="ECO:0000255" key="1">
    <source>
        <dbReference type="HAMAP-Rule" id="MF_00050"/>
    </source>
</evidence>
<reference key="1">
    <citation type="journal article" date="2002" name="Lancet">
        <title>Genome and virulence determinants of high virulence community-acquired MRSA.</title>
        <authorList>
            <person name="Baba T."/>
            <person name="Takeuchi F."/>
            <person name="Kuroda M."/>
            <person name="Yuzawa H."/>
            <person name="Aoki K."/>
            <person name="Oguchi A."/>
            <person name="Nagai Y."/>
            <person name="Iwama N."/>
            <person name="Asano K."/>
            <person name="Naimi T."/>
            <person name="Kuroda H."/>
            <person name="Cui L."/>
            <person name="Yamamoto K."/>
            <person name="Hiramatsu K."/>
        </authorList>
    </citation>
    <scope>NUCLEOTIDE SEQUENCE [LARGE SCALE GENOMIC DNA]</scope>
    <source>
        <strain>MW2</strain>
    </source>
</reference>
<feature type="chain" id="PRO_0000161200" description="Elongation factor Ts">
    <location>
        <begin position="1"/>
        <end position="293"/>
    </location>
</feature>
<feature type="region of interest" description="Involved in Mg(2+) ion dislocation from EF-Tu" evidence="1">
    <location>
        <begin position="80"/>
        <end position="83"/>
    </location>
</feature>
<accession>Q8NWZ6</accession>
<dbReference type="EMBL" id="BA000033">
    <property type="protein sequence ID" value="BAB95005.1"/>
    <property type="molecule type" value="Genomic_DNA"/>
</dbReference>
<dbReference type="RefSeq" id="WP_000201387.1">
    <property type="nucleotide sequence ID" value="NC_003923.1"/>
</dbReference>
<dbReference type="SMR" id="Q8NWZ6"/>
<dbReference type="KEGG" id="sam:MW1140"/>
<dbReference type="HOGENOM" id="CLU_047155_0_2_9"/>
<dbReference type="GO" id="GO:0005737">
    <property type="term" value="C:cytoplasm"/>
    <property type="evidence" value="ECO:0007669"/>
    <property type="project" value="UniProtKB-SubCell"/>
</dbReference>
<dbReference type="GO" id="GO:0003746">
    <property type="term" value="F:translation elongation factor activity"/>
    <property type="evidence" value="ECO:0007669"/>
    <property type="project" value="UniProtKB-UniRule"/>
</dbReference>
<dbReference type="CDD" id="cd14275">
    <property type="entry name" value="UBA_EF-Ts"/>
    <property type="match status" value="1"/>
</dbReference>
<dbReference type="FunFam" id="1.10.286.20:FF:000003">
    <property type="entry name" value="Elongation factor Ts"/>
    <property type="match status" value="1"/>
</dbReference>
<dbReference type="FunFam" id="1.10.8.10:FF:000001">
    <property type="entry name" value="Elongation factor Ts"/>
    <property type="match status" value="1"/>
</dbReference>
<dbReference type="FunFam" id="3.30.479.20:FF:000005">
    <property type="entry name" value="Elongation factor Ts"/>
    <property type="match status" value="1"/>
</dbReference>
<dbReference type="Gene3D" id="1.10.286.20">
    <property type="match status" value="1"/>
</dbReference>
<dbReference type="Gene3D" id="1.10.8.10">
    <property type="entry name" value="DNA helicase RuvA subunit, C-terminal domain"/>
    <property type="match status" value="1"/>
</dbReference>
<dbReference type="Gene3D" id="3.30.479.20">
    <property type="entry name" value="Elongation factor Ts, dimerisation domain"/>
    <property type="match status" value="2"/>
</dbReference>
<dbReference type="HAMAP" id="MF_00050">
    <property type="entry name" value="EF_Ts"/>
    <property type="match status" value="1"/>
</dbReference>
<dbReference type="InterPro" id="IPR036402">
    <property type="entry name" value="EF-Ts_dimer_sf"/>
</dbReference>
<dbReference type="InterPro" id="IPR001816">
    <property type="entry name" value="Transl_elong_EFTs/EF1B"/>
</dbReference>
<dbReference type="InterPro" id="IPR014039">
    <property type="entry name" value="Transl_elong_EFTs/EF1B_dimer"/>
</dbReference>
<dbReference type="InterPro" id="IPR018101">
    <property type="entry name" value="Transl_elong_Ts_CS"/>
</dbReference>
<dbReference type="InterPro" id="IPR009060">
    <property type="entry name" value="UBA-like_sf"/>
</dbReference>
<dbReference type="NCBIfam" id="TIGR00116">
    <property type="entry name" value="tsf"/>
    <property type="match status" value="1"/>
</dbReference>
<dbReference type="PANTHER" id="PTHR11741">
    <property type="entry name" value="ELONGATION FACTOR TS"/>
    <property type="match status" value="1"/>
</dbReference>
<dbReference type="PANTHER" id="PTHR11741:SF0">
    <property type="entry name" value="ELONGATION FACTOR TS, MITOCHONDRIAL"/>
    <property type="match status" value="1"/>
</dbReference>
<dbReference type="Pfam" id="PF00889">
    <property type="entry name" value="EF_TS"/>
    <property type="match status" value="1"/>
</dbReference>
<dbReference type="SUPFAM" id="SSF54713">
    <property type="entry name" value="Elongation factor Ts (EF-Ts), dimerisation domain"/>
    <property type="match status" value="2"/>
</dbReference>
<dbReference type="SUPFAM" id="SSF46934">
    <property type="entry name" value="UBA-like"/>
    <property type="match status" value="1"/>
</dbReference>
<dbReference type="PROSITE" id="PS01126">
    <property type="entry name" value="EF_TS_1"/>
    <property type="match status" value="1"/>
</dbReference>
<dbReference type="PROSITE" id="PS01127">
    <property type="entry name" value="EF_TS_2"/>
    <property type="match status" value="1"/>
</dbReference>